<accession>Q65199</accession>
<sequence length="165" mass="18262">MATNFFIQPITQEAEAYYPPSVITNKRKDLGVDVYCCSDLVLQPGLNIVRLHIKVACEHMGKKCGFKIMARSSMCTHERLLILANGIGLIDPGYVGELMLKIINLGDTPVQIWAKECLVQLVAQGDHVPDHINILKRNQIFPLFAPTPRGEGRFGSTGEAGIMRT</sequence>
<proteinExistence type="evidence at protein level"/>
<reference key="1">
    <citation type="journal article" date="1995" name="Virology">
        <title>Analysis of the complete nucleotide sequence of African swine fever virus.</title>
        <authorList>
            <person name="Yanez R.J."/>
            <person name="Rodriguez J.M."/>
            <person name="Nogal M.L."/>
            <person name="Yuste L."/>
            <person name="Enriquez C."/>
            <person name="Rodriguez J.F."/>
            <person name="Vinuela E."/>
        </authorList>
    </citation>
    <scope>NUCLEOTIDE SEQUENCE [LARGE SCALE GENOMIC DNA]</scope>
</reference>
<reference key="2">
    <citation type="journal article" date="1999" name="J. Virol.">
        <title>African swine fever virus dUTPase is a highly specific enzyme required for efficient replication in swine macrophages.</title>
        <authorList>
            <person name="Oliveros M."/>
            <person name="Garcia-Escudero R."/>
            <person name="Alejo A."/>
            <person name="Vinuela E."/>
            <person name="Salas M.L."/>
            <person name="Salas J."/>
        </authorList>
    </citation>
    <scope>SUBCELLULAR LOCATION</scope>
    <scope>COFACTOR</scope>
    <scope>BIOPHYSICOCHEMICAL PROPERTIES</scope>
    <scope>INDUCTION</scope>
    <scope>FUNCTION</scope>
    <scope>CATALYTIC ACTIVITY</scope>
    <scope>SUBUNIT</scope>
</reference>
<reference key="3">
    <citation type="journal article" date="2018" name="J. Virol.">
        <title>A Proteomic Atlas of the African Swine Fever Virus Particle.</title>
        <authorList>
            <person name="Alejo A."/>
            <person name="Matamoros T."/>
            <person name="Guerra M."/>
            <person name="Andres G."/>
        </authorList>
    </citation>
    <scope>SUBCELLULAR LOCATION</scope>
</reference>
<reference key="4">
    <citation type="journal article" date="2020" name="J. Virol.">
        <title>The African Swine Fever Virus Transcriptome.</title>
        <authorList>
            <person name="Cackett G."/>
            <person name="Matelska D."/>
            <person name="Sykora M."/>
            <person name="Portugal R."/>
            <person name="Malecki M."/>
            <person name="Baehler J."/>
            <person name="Dixon L."/>
            <person name="Werner F."/>
        </authorList>
    </citation>
    <scope>INDUCTION</scope>
</reference>
<organismHost>
    <name type="scientific">Ornithodoros</name>
    <name type="common">relapsing fever ticks</name>
    <dbReference type="NCBI Taxonomy" id="6937"/>
</organismHost>
<organismHost>
    <name type="scientific">Sus scrofa</name>
    <name type="common">Pig</name>
    <dbReference type="NCBI Taxonomy" id="9823"/>
</organismHost>
<gene>
    <name type="ordered locus">Ba71V-131</name>
    <name type="ORF">E165R</name>
</gene>
<evidence type="ECO:0000269" key="1">
    <source>
    </source>
</evidence>
<evidence type="ECO:0000269" key="2">
    <source>
    </source>
</evidence>
<evidence type="ECO:0000269" key="3">
    <source>
    </source>
</evidence>
<evidence type="ECO:0000303" key="4">
    <source>
    </source>
</evidence>
<evidence type="ECO:0000305" key="5"/>
<evidence type="ECO:0007829" key="6">
    <source>
        <dbReference type="PDB" id="6LIS"/>
    </source>
</evidence>
<evidence type="ECO:0007829" key="7">
    <source>
        <dbReference type="PDB" id="6LJ3"/>
    </source>
</evidence>
<name>DUTP_ASFB7</name>
<dbReference type="EC" id="3.6.1.23" evidence="1"/>
<dbReference type="EMBL" id="U18466">
    <property type="protein sequence ID" value="AAA65359.1"/>
    <property type="molecule type" value="Genomic_DNA"/>
</dbReference>
<dbReference type="RefSeq" id="NP_042823.1">
    <property type="nucleotide sequence ID" value="NC_001659.2"/>
</dbReference>
<dbReference type="PDB" id="6LIS">
    <property type="method" value="X-ray"/>
    <property type="resolution" value="2.00 A"/>
    <property type="chains" value="A/B/C/D/E/F=1-165"/>
</dbReference>
<dbReference type="PDB" id="6LJ3">
    <property type="method" value="X-ray"/>
    <property type="resolution" value="2.00 A"/>
    <property type="chains" value="A/B/C=1-165"/>
</dbReference>
<dbReference type="PDB" id="6LJO">
    <property type="method" value="X-ray"/>
    <property type="resolution" value="2.28 A"/>
    <property type="chains" value="A=1-165"/>
</dbReference>
<dbReference type="PDBsum" id="6LIS"/>
<dbReference type="PDBsum" id="6LJ3"/>
<dbReference type="PDBsum" id="6LJO"/>
<dbReference type="SMR" id="Q65199"/>
<dbReference type="GeneID" id="22220359"/>
<dbReference type="KEGG" id="vg:22220359"/>
<dbReference type="Proteomes" id="UP000000624">
    <property type="component" value="Segment"/>
</dbReference>
<dbReference type="GO" id="GO:0030430">
    <property type="term" value="C:host cell cytoplasm"/>
    <property type="evidence" value="ECO:0007669"/>
    <property type="project" value="UniProtKB-SubCell"/>
</dbReference>
<dbReference type="GO" id="GO:0044423">
    <property type="term" value="C:virion component"/>
    <property type="evidence" value="ECO:0007669"/>
    <property type="project" value="UniProtKB-KW"/>
</dbReference>
<dbReference type="GO" id="GO:0004170">
    <property type="term" value="F:dUTP diphosphatase activity"/>
    <property type="evidence" value="ECO:0007669"/>
    <property type="project" value="UniProtKB-EC"/>
</dbReference>
<dbReference type="GO" id="GO:0046872">
    <property type="term" value="F:metal ion binding"/>
    <property type="evidence" value="ECO:0007669"/>
    <property type="project" value="UniProtKB-KW"/>
</dbReference>
<dbReference type="GO" id="GO:0009117">
    <property type="term" value="P:nucleotide metabolic process"/>
    <property type="evidence" value="ECO:0007669"/>
    <property type="project" value="UniProtKB-KW"/>
</dbReference>
<dbReference type="CDD" id="cd07557">
    <property type="entry name" value="trimeric_dUTPase"/>
    <property type="match status" value="1"/>
</dbReference>
<dbReference type="Gene3D" id="2.70.40.10">
    <property type="match status" value="1"/>
</dbReference>
<dbReference type="InterPro" id="IPR029054">
    <property type="entry name" value="dUTPase-like"/>
</dbReference>
<dbReference type="InterPro" id="IPR036157">
    <property type="entry name" value="dUTPase-like_sf"/>
</dbReference>
<dbReference type="InterPro" id="IPR033704">
    <property type="entry name" value="dUTPase_trimeric"/>
</dbReference>
<dbReference type="Pfam" id="PF00692">
    <property type="entry name" value="dUTPase"/>
    <property type="match status" value="1"/>
</dbReference>
<dbReference type="SUPFAM" id="SSF51283">
    <property type="entry name" value="dUTPase-like"/>
    <property type="match status" value="1"/>
</dbReference>
<organism>
    <name type="scientific">African swine fever virus (strain Badajoz 1971 Vero-adapted)</name>
    <name type="common">Ba71V</name>
    <name type="synonym">ASFV</name>
    <dbReference type="NCBI Taxonomy" id="10498"/>
    <lineage>
        <taxon>Viruses</taxon>
        <taxon>Varidnaviria</taxon>
        <taxon>Bamfordvirae</taxon>
        <taxon>Nucleocytoviricota</taxon>
        <taxon>Pokkesviricetes</taxon>
        <taxon>Asfuvirales</taxon>
        <taxon>Asfarviridae</taxon>
        <taxon>Asfivirus</taxon>
        <taxon>African swine fever virus</taxon>
    </lineage>
</organism>
<protein>
    <recommendedName>
        <fullName>Deoxyuridine 5'-triphosphate nucleotidohydrolase</fullName>
        <shortName evidence="4">dUTPase</shortName>
        <ecNumber evidence="1">3.6.1.23</ecNumber>
    </recommendedName>
    <alternativeName>
        <fullName>dUTP pyrophosphatase</fullName>
    </alternativeName>
</protein>
<keyword id="KW-0002">3D-structure</keyword>
<keyword id="KW-0244">Early protein</keyword>
<keyword id="KW-1035">Host cytoplasm</keyword>
<keyword id="KW-0378">Hydrolase</keyword>
<keyword id="KW-0460">Magnesium</keyword>
<keyword id="KW-0479">Metal-binding</keyword>
<keyword id="KW-0546">Nucleotide metabolism</keyword>
<keyword id="KW-1185">Reference proteome</keyword>
<keyword id="KW-0946">Virion</keyword>
<comment type="function">
    <text evidence="1">The viral dUTPase may play a role in lowering the dUTP concentration in natural infections to minimize misincorporation of deoxyuridine into the viral DNA and ensure the fidelity of genome replication.</text>
</comment>
<comment type="catalytic activity">
    <reaction>
        <text>dUTP + H2O = dUMP + diphosphate + H(+)</text>
        <dbReference type="Rhea" id="RHEA:10248"/>
        <dbReference type="ChEBI" id="CHEBI:15377"/>
        <dbReference type="ChEBI" id="CHEBI:15378"/>
        <dbReference type="ChEBI" id="CHEBI:33019"/>
        <dbReference type="ChEBI" id="CHEBI:61555"/>
        <dbReference type="ChEBI" id="CHEBI:246422"/>
        <dbReference type="EC" id="3.6.1.23"/>
    </reaction>
</comment>
<comment type="cofactor">
    <cofactor evidence="1">
        <name>Mg(2+)</name>
        <dbReference type="ChEBI" id="CHEBI:18420"/>
    </cofactor>
</comment>
<comment type="biophysicochemical properties">
    <kinetics>
        <KM evidence="1">1 uM for dUTP</KM>
    </kinetics>
</comment>
<comment type="subunit">
    <text evidence="1">Homotrimer.</text>
</comment>
<comment type="subcellular location">
    <subcellularLocation>
        <location evidence="1">Host cytoplasm</location>
    </subcellularLocation>
    <subcellularLocation>
        <location evidence="2">Virion</location>
    </subcellularLocation>
    <text evidence="2">Found in association with viral nucleoid.</text>
</comment>
<comment type="induction">
    <text evidence="1 3">Expressed in the early phase of the viral replicative cycle.</text>
</comment>
<comment type="similarity">
    <text evidence="5">Belongs to the dUTPase family.</text>
</comment>
<feature type="chain" id="PRO_0000373133" description="Deoxyuridine 5'-triphosphate nucleotidohydrolase">
    <location>
        <begin position="1"/>
        <end position="165"/>
    </location>
</feature>
<feature type="strand" evidence="6">
    <location>
        <begin position="3"/>
        <end position="9"/>
    </location>
</feature>
<feature type="helix" evidence="6">
    <location>
        <begin position="12"/>
        <end position="17"/>
    </location>
</feature>
<feature type="strand" evidence="6">
    <location>
        <begin position="20"/>
        <end position="24"/>
    </location>
</feature>
<feature type="strand" evidence="6">
    <location>
        <begin position="32"/>
        <end position="34"/>
    </location>
</feature>
<feature type="strand" evidence="6">
    <location>
        <begin position="40"/>
        <end position="42"/>
    </location>
</feature>
<feature type="strand" evidence="6">
    <location>
        <begin position="44"/>
        <end position="50"/>
    </location>
</feature>
<feature type="strand" evidence="6">
    <location>
        <begin position="53"/>
        <end position="59"/>
    </location>
</feature>
<feature type="strand" evidence="6">
    <location>
        <begin position="62"/>
        <end position="64"/>
    </location>
</feature>
<feature type="strand" evidence="6">
    <location>
        <begin position="66"/>
        <end position="70"/>
    </location>
</feature>
<feature type="strand" evidence="6">
    <location>
        <begin position="74"/>
        <end position="76"/>
    </location>
</feature>
<feature type="strand" evidence="6">
    <location>
        <begin position="81"/>
        <end position="83"/>
    </location>
</feature>
<feature type="strand" evidence="6">
    <location>
        <begin position="86"/>
        <end position="90"/>
    </location>
</feature>
<feature type="strand" evidence="6">
    <location>
        <begin position="99"/>
        <end position="104"/>
    </location>
</feature>
<feature type="strand" evidence="6">
    <location>
        <begin position="106"/>
        <end position="108"/>
    </location>
</feature>
<feature type="strand" evidence="6">
    <location>
        <begin position="110"/>
        <end position="112"/>
    </location>
</feature>
<feature type="strand" evidence="6">
    <location>
        <begin position="119"/>
        <end position="123"/>
    </location>
</feature>
<feature type="helix" evidence="6">
    <location>
        <begin position="124"/>
        <end position="126"/>
    </location>
</feature>
<feature type="strand" evidence="6">
    <location>
        <begin position="130"/>
        <end position="134"/>
    </location>
</feature>
<feature type="strand" evidence="6">
    <location>
        <begin position="137"/>
        <end position="139"/>
    </location>
</feature>
<feature type="helix" evidence="7">
    <location>
        <begin position="142"/>
        <end position="144"/>
    </location>
</feature>
<feature type="strand" evidence="7">
    <location>
        <begin position="148"/>
        <end position="150"/>
    </location>
</feature>
<feature type="turn" evidence="7">
    <location>
        <begin position="154"/>
        <end position="157"/>
    </location>
</feature>
<feature type="turn" evidence="7">
    <location>
        <begin position="159"/>
        <end position="163"/>
    </location>
</feature>